<accession>Q5ZHV7</accession>
<name>SPRY7_CHICK</name>
<gene>
    <name type="primary">SPRYD7</name>
    <name type="synonym">CLLD6</name>
    <name type="ORF">RCJMB04_32l12</name>
</gene>
<proteinExistence type="evidence at transcript level"/>
<organism>
    <name type="scientific">Gallus gallus</name>
    <name type="common">Chicken</name>
    <dbReference type="NCBI Taxonomy" id="9031"/>
    <lineage>
        <taxon>Eukaryota</taxon>
        <taxon>Metazoa</taxon>
        <taxon>Chordata</taxon>
        <taxon>Craniata</taxon>
        <taxon>Vertebrata</taxon>
        <taxon>Euteleostomi</taxon>
        <taxon>Archelosauria</taxon>
        <taxon>Archosauria</taxon>
        <taxon>Dinosauria</taxon>
        <taxon>Saurischia</taxon>
        <taxon>Theropoda</taxon>
        <taxon>Coelurosauria</taxon>
        <taxon>Aves</taxon>
        <taxon>Neognathae</taxon>
        <taxon>Galloanserae</taxon>
        <taxon>Galliformes</taxon>
        <taxon>Phasianidae</taxon>
        <taxon>Phasianinae</taxon>
        <taxon>Gallus</taxon>
    </lineage>
</organism>
<protein>
    <recommendedName>
        <fullName>SPRY domain-containing protein 7</fullName>
    </recommendedName>
    <alternativeName>
        <fullName>Chronic lymphocytic leukemia deletion region gene 6 protein homolog</fullName>
        <shortName>CLL deletion region gene 6 protein homolog</shortName>
    </alternativeName>
</protein>
<feature type="chain" id="PRO_0000243928" description="SPRY domain-containing protein 7">
    <location>
        <begin position="1"/>
        <end position="196"/>
    </location>
</feature>
<feature type="domain" description="B30.2/SPRY" evidence="1">
    <location>
        <begin position="1"/>
        <end position="184"/>
    </location>
</feature>
<sequence>MAASVFCCLRWCRDGGAGHIPLKEMPAVQLDTQRMGTDVVIVKNGRRICGTGGCLANAPLHQNKSYFEFKIQSTGIWGIGVATQKANLNQIPLGRDVHSLVMRNDGALYYNNEEKNRLPANSLPQEGDVVGITYDHVELNVYLNGKNMHCPASGIRGTVYPVVYVDDSAILDCQFSEFYHTPPPGFEKILFEQQIF</sequence>
<dbReference type="EMBL" id="AJ721027">
    <property type="protein sequence ID" value="CAG32686.1"/>
    <property type="molecule type" value="mRNA"/>
</dbReference>
<dbReference type="RefSeq" id="NP_001006273.1">
    <property type="nucleotide sequence ID" value="NM_001006273.2"/>
</dbReference>
<dbReference type="SMR" id="Q5ZHV7"/>
<dbReference type="FunCoup" id="Q5ZHV7">
    <property type="interactions" value="507"/>
</dbReference>
<dbReference type="STRING" id="9031.ENSGALP00000027424"/>
<dbReference type="PaxDb" id="9031-ENSGALP00000027424"/>
<dbReference type="GeneID" id="418871"/>
<dbReference type="KEGG" id="gga:418871"/>
<dbReference type="CTD" id="57213"/>
<dbReference type="VEuPathDB" id="HostDB:geneid_418871"/>
<dbReference type="eggNOG" id="KOG4030">
    <property type="taxonomic scope" value="Eukaryota"/>
</dbReference>
<dbReference type="HOGENOM" id="CLU_085855_0_0_1"/>
<dbReference type="InParanoid" id="Q5ZHV7"/>
<dbReference type="OMA" id="HMGNEVV"/>
<dbReference type="OrthoDB" id="40953at2759"/>
<dbReference type="PhylomeDB" id="Q5ZHV7"/>
<dbReference type="TreeFam" id="TF314996"/>
<dbReference type="PRO" id="PR:Q5ZHV7"/>
<dbReference type="Proteomes" id="UP000000539">
    <property type="component" value="Chromosome 1"/>
</dbReference>
<dbReference type="Bgee" id="ENSGALG00000017010">
    <property type="expression patterns" value="Expressed in skeletal muscle tissue and 13 other cell types or tissues"/>
</dbReference>
<dbReference type="CDD" id="cd12880">
    <property type="entry name" value="SPRYD7"/>
    <property type="match status" value="1"/>
</dbReference>
<dbReference type="Gene3D" id="2.60.120.920">
    <property type="match status" value="1"/>
</dbReference>
<dbReference type="InterPro" id="IPR001870">
    <property type="entry name" value="B30.2/SPRY"/>
</dbReference>
<dbReference type="InterPro" id="IPR043136">
    <property type="entry name" value="B30.2/SPRY_sf"/>
</dbReference>
<dbReference type="InterPro" id="IPR013320">
    <property type="entry name" value="ConA-like_dom_sf"/>
</dbReference>
<dbReference type="InterPro" id="IPR003877">
    <property type="entry name" value="SPRY_dom"/>
</dbReference>
<dbReference type="InterPro" id="IPR035766">
    <property type="entry name" value="SPRYD7"/>
</dbReference>
<dbReference type="PANTHER" id="PTHR20951">
    <property type="entry name" value="C13ORF1 PROTEIN-RELATED"/>
    <property type="match status" value="1"/>
</dbReference>
<dbReference type="PANTHER" id="PTHR20951:SF2">
    <property type="entry name" value="SPRY DOMAIN-CONTAINING PROTEIN 7"/>
    <property type="match status" value="1"/>
</dbReference>
<dbReference type="Pfam" id="PF00622">
    <property type="entry name" value="SPRY"/>
    <property type="match status" value="1"/>
</dbReference>
<dbReference type="SMART" id="SM00449">
    <property type="entry name" value="SPRY"/>
    <property type="match status" value="1"/>
</dbReference>
<dbReference type="SUPFAM" id="SSF49899">
    <property type="entry name" value="Concanavalin A-like lectins/glucanases"/>
    <property type="match status" value="1"/>
</dbReference>
<dbReference type="PROSITE" id="PS50188">
    <property type="entry name" value="B302_SPRY"/>
    <property type="match status" value="1"/>
</dbReference>
<reference key="1">
    <citation type="journal article" date="2005" name="Genome Biol.">
        <title>Full-length cDNAs from chicken bursal lymphocytes to facilitate gene function analysis.</title>
        <authorList>
            <person name="Caldwell R.B."/>
            <person name="Kierzek A.M."/>
            <person name="Arakawa H."/>
            <person name="Bezzubov Y."/>
            <person name="Zaim J."/>
            <person name="Fiedler P."/>
            <person name="Kutter S."/>
            <person name="Blagodatski A."/>
            <person name="Kostovska D."/>
            <person name="Koter M."/>
            <person name="Plachy J."/>
            <person name="Carninci P."/>
            <person name="Hayashizaki Y."/>
            <person name="Buerstedde J.-M."/>
        </authorList>
    </citation>
    <scope>NUCLEOTIDE SEQUENCE [LARGE SCALE MRNA]</scope>
    <source>
        <strain>CB</strain>
        <tissue>Bursa of Fabricius</tissue>
    </source>
</reference>
<keyword id="KW-1185">Reference proteome</keyword>
<evidence type="ECO:0000255" key="1">
    <source>
        <dbReference type="PROSITE-ProRule" id="PRU00548"/>
    </source>
</evidence>